<sequence>MTDNNKYRDVEIRAPRGNKLTAKSWLTEAPLRMLMNNLDPQVAENPKELVVYGGIGRAARNWECYDKIVETLTRLEDDETLLVQSGKPVGVFKTHSNAPRVLIANSNLVPHWANWEHFNELDAKGLAMYGQMTAGSWIYIGSQGIVQGTYETFVEAGRQHYGGSLKGKWVLTAGLGGMGGAQPLAATLAGACSLNIECQQSRIDFRLETRYVDEQATDLDDALARIAKYTAEGKAISIALHGNAAEILPELVKRGVRPDMVTDQTSAHDPLNGYLPAGWTWEQYRDRAQTEPAAVVKAAKQSMAVHVQAMLDFQKQGIPTFDYGNNIRQMAKEEGVANAFDFPGFVPAYIRPLFCRGIGPFRWAALSGEAEDIYKTDAKVKELIPDDAHLHRWLDMARERISFQGLPARICWVGLGLRAKLGLAFNEMVRSGELSAPVVIGRDHLDSGSVSSPNRETEAMRDGSDAVSDWPLLNALLNTAGGATWVSLHHGGGVGMGFSQHSGMVIVCDGTDEAAERIARVLTNDPGTGVMRHADAGYDIAIDCAKEQGLDLPMITG</sequence>
<name>HUTU_PSEPG</name>
<keyword id="KW-0963">Cytoplasm</keyword>
<keyword id="KW-0369">Histidine metabolism</keyword>
<keyword id="KW-0456">Lyase</keyword>
<keyword id="KW-0520">NAD</keyword>
<accession>B0KM58</accession>
<reference key="1">
    <citation type="submission" date="2008-01" db="EMBL/GenBank/DDBJ databases">
        <title>Complete sequence of Pseudomonas putida GB-1.</title>
        <authorList>
            <consortium name="US DOE Joint Genome Institute"/>
            <person name="Copeland A."/>
            <person name="Lucas S."/>
            <person name="Lapidus A."/>
            <person name="Barry K."/>
            <person name="Glavina del Rio T."/>
            <person name="Dalin E."/>
            <person name="Tice H."/>
            <person name="Pitluck S."/>
            <person name="Bruce D."/>
            <person name="Goodwin L."/>
            <person name="Chertkov O."/>
            <person name="Brettin T."/>
            <person name="Detter J.C."/>
            <person name="Han C."/>
            <person name="Kuske C.R."/>
            <person name="Schmutz J."/>
            <person name="Larimer F."/>
            <person name="Land M."/>
            <person name="Hauser L."/>
            <person name="Kyrpides N."/>
            <person name="Kim E."/>
            <person name="McCarthy J.K."/>
            <person name="Richardson P."/>
        </authorList>
    </citation>
    <scope>NUCLEOTIDE SEQUENCE [LARGE SCALE GENOMIC DNA]</scope>
    <source>
        <strain>GB-1</strain>
    </source>
</reference>
<organism>
    <name type="scientific">Pseudomonas putida (strain GB-1)</name>
    <dbReference type="NCBI Taxonomy" id="76869"/>
    <lineage>
        <taxon>Bacteria</taxon>
        <taxon>Pseudomonadati</taxon>
        <taxon>Pseudomonadota</taxon>
        <taxon>Gammaproteobacteria</taxon>
        <taxon>Pseudomonadales</taxon>
        <taxon>Pseudomonadaceae</taxon>
        <taxon>Pseudomonas</taxon>
    </lineage>
</organism>
<proteinExistence type="inferred from homology"/>
<evidence type="ECO:0000255" key="1">
    <source>
        <dbReference type="HAMAP-Rule" id="MF_00577"/>
    </source>
</evidence>
<dbReference type="EC" id="4.2.1.49" evidence="1"/>
<dbReference type="EMBL" id="CP000926">
    <property type="protein sequence ID" value="ABZ00968.1"/>
    <property type="molecule type" value="Genomic_DNA"/>
</dbReference>
<dbReference type="RefSeq" id="WP_012274589.1">
    <property type="nucleotide sequence ID" value="NC_010322.1"/>
</dbReference>
<dbReference type="SMR" id="B0KM58"/>
<dbReference type="GeneID" id="83672429"/>
<dbReference type="KEGG" id="ppg:PputGB1_5083"/>
<dbReference type="eggNOG" id="COG2987">
    <property type="taxonomic scope" value="Bacteria"/>
</dbReference>
<dbReference type="HOGENOM" id="CLU_018868_0_1_6"/>
<dbReference type="UniPathway" id="UPA00379">
    <property type="reaction ID" value="UER00550"/>
</dbReference>
<dbReference type="Proteomes" id="UP000002157">
    <property type="component" value="Chromosome"/>
</dbReference>
<dbReference type="GO" id="GO:0005737">
    <property type="term" value="C:cytoplasm"/>
    <property type="evidence" value="ECO:0007669"/>
    <property type="project" value="UniProtKB-SubCell"/>
</dbReference>
<dbReference type="GO" id="GO:0016153">
    <property type="term" value="F:urocanate hydratase activity"/>
    <property type="evidence" value="ECO:0007669"/>
    <property type="project" value="UniProtKB-UniRule"/>
</dbReference>
<dbReference type="GO" id="GO:0019556">
    <property type="term" value="P:L-histidine catabolic process to glutamate and formamide"/>
    <property type="evidence" value="ECO:0007669"/>
    <property type="project" value="UniProtKB-UniPathway"/>
</dbReference>
<dbReference type="GO" id="GO:0019557">
    <property type="term" value="P:L-histidine catabolic process to glutamate and formate"/>
    <property type="evidence" value="ECO:0007669"/>
    <property type="project" value="UniProtKB-UniPathway"/>
</dbReference>
<dbReference type="FunFam" id="3.40.50.10730:FF:000001">
    <property type="entry name" value="Urocanate hydratase"/>
    <property type="match status" value="1"/>
</dbReference>
<dbReference type="Gene3D" id="3.40.50.10730">
    <property type="entry name" value="Urocanase like domains"/>
    <property type="match status" value="1"/>
</dbReference>
<dbReference type="Gene3D" id="3.40.1770.10">
    <property type="entry name" value="Urocanase superfamily"/>
    <property type="match status" value="1"/>
</dbReference>
<dbReference type="HAMAP" id="MF_00577">
    <property type="entry name" value="HutU"/>
    <property type="match status" value="1"/>
</dbReference>
<dbReference type="InterPro" id="IPR055351">
    <property type="entry name" value="Urocanase"/>
</dbReference>
<dbReference type="InterPro" id="IPR023637">
    <property type="entry name" value="Urocanase-like"/>
</dbReference>
<dbReference type="InterPro" id="IPR035401">
    <property type="entry name" value="Urocanase_C"/>
</dbReference>
<dbReference type="InterPro" id="IPR038364">
    <property type="entry name" value="Urocanase_central_sf"/>
</dbReference>
<dbReference type="InterPro" id="IPR023636">
    <property type="entry name" value="Urocanase_CS"/>
</dbReference>
<dbReference type="InterPro" id="IPR035400">
    <property type="entry name" value="Urocanase_N"/>
</dbReference>
<dbReference type="InterPro" id="IPR035085">
    <property type="entry name" value="Urocanase_Rossmann-like"/>
</dbReference>
<dbReference type="InterPro" id="IPR036190">
    <property type="entry name" value="Urocanase_sf"/>
</dbReference>
<dbReference type="NCBIfam" id="TIGR01228">
    <property type="entry name" value="hutU"/>
    <property type="match status" value="1"/>
</dbReference>
<dbReference type="NCBIfam" id="NF003820">
    <property type="entry name" value="PRK05414.1"/>
    <property type="match status" value="1"/>
</dbReference>
<dbReference type="PANTHER" id="PTHR12216">
    <property type="entry name" value="UROCANATE HYDRATASE"/>
    <property type="match status" value="1"/>
</dbReference>
<dbReference type="PANTHER" id="PTHR12216:SF4">
    <property type="entry name" value="UROCANATE HYDRATASE"/>
    <property type="match status" value="1"/>
</dbReference>
<dbReference type="Pfam" id="PF01175">
    <property type="entry name" value="Urocanase"/>
    <property type="match status" value="1"/>
</dbReference>
<dbReference type="Pfam" id="PF17392">
    <property type="entry name" value="Urocanase_C"/>
    <property type="match status" value="1"/>
</dbReference>
<dbReference type="Pfam" id="PF17391">
    <property type="entry name" value="Urocanase_N"/>
    <property type="match status" value="1"/>
</dbReference>
<dbReference type="PIRSF" id="PIRSF001423">
    <property type="entry name" value="Urocanate_hydrat"/>
    <property type="match status" value="1"/>
</dbReference>
<dbReference type="SUPFAM" id="SSF111326">
    <property type="entry name" value="Urocanase"/>
    <property type="match status" value="1"/>
</dbReference>
<dbReference type="PROSITE" id="PS01233">
    <property type="entry name" value="UROCANASE"/>
    <property type="match status" value="1"/>
</dbReference>
<feature type="chain" id="PRO_1000082350" description="Urocanate hydratase">
    <location>
        <begin position="1"/>
        <end position="557"/>
    </location>
</feature>
<feature type="active site" evidence="1">
    <location>
        <position position="411"/>
    </location>
</feature>
<feature type="binding site" evidence="1">
    <location>
        <begin position="53"/>
        <end position="54"/>
    </location>
    <ligand>
        <name>NAD(+)</name>
        <dbReference type="ChEBI" id="CHEBI:57540"/>
    </ligand>
</feature>
<feature type="binding site" evidence="1">
    <location>
        <position position="131"/>
    </location>
    <ligand>
        <name>NAD(+)</name>
        <dbReference type="ChEBI" id="CHEBI:57540"/>
    </ligand>
</feature>
<feature type="binding site" evidence="1">
    <location>
        <begin position="177"/>
        <end position="179"/>
    </location>
    <ligand>
        <name>NAD(+)</name>
        <dbReference type="ChEBI" id="CHEBI:57540"/>
    </ligand>
</feature>
<feature type="binding site" evidence="1">
    <location>
        <position position="197"/>
    </location>
    <ligand>
        <name>NAD(+)</name>
        <dbReference type="ChEBI" id="CHEBI:57540"/>
    </ligand>
</feature>
<feature type="binding site" evidence="1">
    <location>
        <position position="202"/>
    </location>
    <ligand>
        <name>NAD(+)</name>
        <dbReference type="ChEBI" id="CHEBI:57540"/>
    </ligand>
</feature>
<feature type="binding site" evidence="1">
    <location>
        <begin position="243"/>
        <end position="244"/>
    </location>
    <ligand>
        <name>NAD(+)</name>
        <dbReference type="ChEBI" id="CHEBI:57540"/>
    </ligand>
</feature>
<feature type="binding site" evidence="1">
    <location>
        <begin position="264"/>
        <end position="268"/>
    </location>
    <ligand>
        <name>NAD(+)</name>
        <dbReference type="ChEBI" id="CHEBI:57540"/>
    </ligand>
</feature>
<feature type="binding site" evidence="1">
    <location>
        <begin position="274"/>
        <end position="275"/>
    </location>
    <ligand>
        <name>NAD(+)</name>
        <dbReference type="ChEBI" id="CHEBI:57540"/>
    </ligand>
</feature>
<feature type="binding site" evidence="1">
    <location>
        <position position="323"/>
    </location>
    <ligand>
        <name>NAD(+)</name>
        <dbReference type="ChEBI" id="CHEBI:57540"/>
    </ligand>
</feature>
<feature type="binding site" evidence="1">
    <location>
        <position position="493"/>
    </location>
    <ligand>
        <name>NAD(+)</name>
        <dbReference type="ChEBI" id="CHEBI:57540"/>
    </ligand>
</feature>
<protein>
    <recommendedName>
        <fullName evidence="1">Urocanate hydratase</fullName>
        <shortName evidence="1">Urocanase</shortName>
        <ecNumber evidence="1">4.2.1.49</ecNumber>
    </recommendedName>
    <alternativeName>
        <fullName evidence="1">Imidazolonepropionate hydrolase</fullName>
    </alternativeName>
</protein>
<comment type="function">
    <text evidence="1">Catalyzes the conversion of urocanate to 4-imidazolone-5-propionate.</text>
</comment>
<comment type="catalytic activity">
    <reaction evidence="1">
        <text>4-imidazolone-5-propanoate = trans-urocanate + H2O</text>
        <dbReference type="Rhea" id="RHEA:13101"/>
        <dbReference type="ChEBI" id="CHEBI:15377"/>
        <dbReference type="ChEBI" id="CHEBI:17771"/>
        <dbReference type="ChEBI" id="CHEBI:77893"/>
        <dbReference type="EC" id="4.2.1.49"/>
    </reaction>
</comment>
<comment type="cofactor">
    <cofactor evidence="1">
        <name>NAD(+)</name>
        <dbReference type="ChEBI" id="CHEBI:57540"/>
    </cofactor>
    <text evidence="1">Binds 1 NAD(+) per subunit.</text>
</comment>
<comment type="pathway">
    <text evidence="1">Amino-acid degradation; L-histidine degradation into L-glutamate; N-formimidoyl-L-glutamate from L-histidine: step 2/3.</text>
</comment>
<comment type="subcellular location">
    <subcellularLocation>
        <location evidence="1">Cytoplasm</location>
    </subcellularLocation>
</comment>
<comment type="similarity">
    <text evidence="1">Belongs to the urocanase family.</text>
</comment>
<gene>
    <name evidence="1" type="primary">hutU</name>
    <name type="ordered locus">PputGB1_5083</name>
</gene>